<sequence length="790" mass="71267">VTAAPAATAATAATPATAALNFAATAATPATPATPALIFAATAATAATPATAALNFAATAATPATAATPALIFAAAAATAATPATAALNFAATAATPATAATPALIFAATAATAATPATPAFHFAATAATPATAATPALIFAATAATAATPATPAFHFAATAATPATAATPALIFAATAATAATPATAALNFAATAATPATAATPALIFAATAATAATPATAALNFAATAATAATPATAACNFAATAATPATAATPALIFAATAATAATPATAACNFAATAATPATAATPALIFAATAATAATPATAALNFAATAATPATAATPALIFAATAATAATPATAALNFAATAATPATAATPALIFAATAATAATPATAALNFAATAATAATPATPAFNFAATAATPATAATPALIFAATAATAATPATAALNFAATAATPATAATPALIFAATAATAATPATAALHFAATAATAATPATAALNFAATAATPATAATPALIFAATAATAATPATAAFNFAATAATAATPATAALNFAATAATPATAATPALIFAATAATAATPATAALNFAATAATPATAATPALIFAATAATAATPATPAFHFAATAATPATAATPALIFAATAATAATPATAALNFAATAATAATPATAALNFAATAATPATAATPALIFAATAATAATPATAALNFAATAATPATAATPALIFAATAATAATPATAAFNFAATAATAATPATAATPALIFAATAATAATPATPATPALIFAATAATAATPATPALNFAATAATAATTAARG</sequence>
<comment type="function">
    <text>Antifreeze proteins lower the blood freezing point.</text>
</comment>
<comment type="subcellular location">
    <subcellularLocation>
        <location>Secreted</location>
    </subcellularLocation>
</comment>
<comment type="tissue specificity">
    <text>Synthesized by the liver and secreted into the blood from which they become distributed to almost the entire extracellular space.</text>
</comment>
<comment type="domain">
    <text>Contains 44 copies of AFGP8 and two copies of AFGP7.</text>
</comment>
<comment type="PTM">
    <text>O-glycosylated; contains disaccharide galactose-N-acetylgalactosamine attached to threonines in AFGP8 and AFGP7.</text>
</comment>
<comment type="online information" name="Protein Spotlight">
    <link uri="https://www.proteinspotlight.org/back_issues/005"/>
    <text>Cool news - Issue 5 of December 2000</text>
</comment>
<keyword id="KW-0047">Antifreeze protein</keyword>
<keyword id="KW-0903">Direct protein sequencing</keyword>
<keyword id="KW-0325">Glycoprotein</keyword>
<keyword id="KW-0677">Repeat</keyword>
<keyword id="KW-0964">Secreted</keyword>
<accession>P24856</accession>
<organism>
    <name type="scientific">Notothenia neglecta</name>
    <name type="common">Yellowbelly rockcod</name>
    <name type="synonym">Notothenia coriiceps neglecta</name>
    <dbReference type="NCBI Taxonomy" id="202063"/>
    <lineage>
        <taxon>Eukaryota</taxon>
        <taxon>Metazoa</taxon>
        <taxon>Chordata</taxon>
        <taxon>Craniata</taxon>
        <taxon>Vertebrata</taxon>
        <taxon>Euteleostomi</taxon>
        <taxon>Actinopterygii</taxon>
        <taxon>Neopterygii</taxon>
        <taxon>Teleostei</taxon>
        <taxon>Neoteleostei</taxon>
        <taxon>Acanthomorphata</taxon>
        <taxon>Eupercaria</taxon>
        <taxon>Perciformes</taxon>
        <taxon>Notothenioidei</taxon>
        <taxon>Nototheniidae</taxon>
        <taxon>Notothenia</taxon>
    </lineage>
</organism>
<proteinExistence type="evidence at protein level"/>
<gene>
    <name type="primary">afgp8</name>
</gene>
<reference key="1">
    <citation type="journal article" date="1990" name="Proc. Natl. Acad. Sci. U.S.A.">
        <title>An antifreeze glycopeptide gene from the antarctic cod Notothenia coriiceps neglecta encodes a polyprotein of high peptide copy number.</title>
        <authorList>
            <person name="Hsiao K.-C."/>
            <person name="Cheng C.-H.C."/>
            <person name="Fernandes I.E."/>
            <person name="Detrich H.W. III"/>
            <person name="Devries A.L."/>
        </authorList>
    </citation>
    <scope>NUCLEOTIDE SEQUENCE [GENOMIC DNA]</scope>
    <scope>PARTIAL PROTEIN SEQUENCE</scope>
    <source>
        <tissue>Testis</tissue>
    </source>
</reference>
<reference key="2">
    <citation type="submission" date="1999-03" db="EMBL/GenBank/DDBJ databases">
        <authorList>
            <person name="Cheng C.-H.C."/>
        </authorList>
    </citation>
    <scope>SEQUENCE REVISION TO N-TERMINUS AND 457</scope>
</reference>
<dbReference type="EMBL" id="M55000">
    <property type="protein sequence ID" value="AAA49392.2"/>
    <property type="molecule type" value="Genomic_DNA"/>
</dbReference>
<dbReference type="PIR" id="A38420">
    <property type="entry name" value="A38420"/>
</dbReference>
<dbReference type="GO" id="GO:0005576">
    <property type="term" value="C:extracellular region"/>
    <property type="evidence" value="ECO:0007669"/>
    <property type="project" value="UniProtKB-SubCell"/>
</dbReference>
<name>ANP_NOTNE</name>
<protein>
    <recommendedName>
        <fullName>Ice-structuring glycoprotein</fullName>
        <shortName>ISGP</shortName>
    </recommendedName>
    <alternativeName>
        <fullName>Antifreeze glycopeptide polyprotein</fullName>
        <shortName>AFGP polyprotein</shortName>
    </alternativeName>
    <component>
        <recommendedName>
            <fullName>AFGP7-1</fullName>
        </recommendedName>
        <alternativeName>
            <fullName>AFGP 7</fullName>
        </alternativeName>
    </component>
    <component>
        <recommendedName>
            <fullName>AFGP7-2</fullName>
        </recommendedName>
        <alternativeName>
            <fullName>AFGP 7</fullName>
        </alternativeName>
    </component>
    <component>
        <recommendedName>
            <fullName>AFGP8-1</fullName>
        </recommendedName>
        <alternativeName>
            <fullName>AFGP 8</fullName>
        </alternativeName>
    </component>
    <component>
        <recommendedName>
            <fullName>AFGP8-2</fullName>
        </recommendedName>
        <alternativeName>
            <fullName>AFGP 8</fullName>
        </alternativeName>
    </component>
    <component>
        <recommendedName>
            <fullName>AFGP8-3</fullName>
        </recommendedName>
        <alternativeName>
            <fullName>AFGP 8</fullName>
        </alternativeName>
    </component>
    <component>
        <recommendedName>
            <fullName>AFGP8-4</fullName>
        </recommendedName>
        <alternativeName>
            <fullName>AFGP 8</fullName>
        </alternativeName>
    </component>
    <component>
        <recommendedName>
            <fullName>AFGP8-5</fullName>
        </recommendedName>
        <alternativeName>
            <fullName>AFGP 8</fullName>
        </alternativeName>
    </component>
    <component>
        <recommendedName>
            <fullName>AFGP8-like</fullName>
        </recommendedName>
    </component>
</protein>
<feature type="propeptide" id="PRO_0000001634">
    <location>
        <begin position="1" status="less than"/>
        <end position="5"/>
    </location>
</feature>
<feature type="chain" id="PRO_0000001635" description="Ice-structuring glycoprotein">
    <location>
        <begin position="6"/>
        <end position="790"/>
    </location>
</feature>
<feature type="peptide" id="PRO_0000001636" description="AFGP8-1">
    <location>
        <begin position="6"/>
        <end position="19"/>
    </location>
</feature>
<feature type="peptide" id="PRO_0000001637" description="AFGP8-5">
    <location>
        <begin position="23"/>
        <end position="36"/>
    </location>
</feature>
<feature type="peptide" id="PRO_0000001638" description="AFGP8-1">
    <location>
        <begin position="40"/>
        <end position="53"/>
    </location>
</feature>
<feature type="peptide" id="PRO_0000001639" description="AFGP8-4">
    <location>
        <begin position="57"/>
        <end position="70"/>
    </location>
</feature>
<feature type="peptide" id="PRO_0000001640" description="AFGP8-2">
    <location>
        <begin position="74"/>
        <end position="87"/>
    </location>
</feature>
<feature type="peptide" id="PRO_0000001641" description="AFGP8-4">
    <location>
        <begin position="91"/>
        <end position="104"/>
    </location>
</feature>
<feature type="peptide" id="PRO_0000001642" description="AFGP8-3">
    <location>
        <begin position="108"/>
        <end position="121"/>
    </location>
</feature>
<feature type="peptide" id="PRO_0000001643" description="AFGP8-4">
    <location>
        <begin position="125"/>
        <end position="138"/>
    </location>
</feature>
<feature type="peptide" id="PRO_0000001644" description="AFGP8-3">
    <location>
        <begin position="142"/>
        <end position="155"/>
    </location>
</feature>
<feature type="peptide" id="PRO_0000001645" description="AFGP8-4">
    <location>
        <begin position="159"/>
        <end position="172"/>
    </location>
</feature>
<feature type="peptide" id="PRO_0000001646" description="AFGP8-1">
    <location>
        <begin position="176"/>
        <end position="189"/>
    </location>
</feature>
<feature type="peptide" id="PRO_0000001647" description="AFGP8-4">
    <location>
        <begin position="193"/>
        <end position="206"/>
    </location>
</feature>
<feature type="peptide" id="PRO_0000001648" description="AFGP8-1">
    <location>
        <begin position="210"/>
        <end position="223"/>
    </location>
</feature>
<feature type="peptide" id="PRO_0000001649" description="AFGP8-1">
    <location>
        <begin position="227"/>
        <end position="240"/>
    </location>
</feature>
<feature type="peptide" id="PRO_0000001650" description="AFGP8-4">
    <location>
        <begin position="244"/>
        <end position="257"/>
    </location>
</feature>
<feature type="peptide" id="PRO_0000001651" description="AFGP8-1">
    <location>
        <begin position="261"/>
        <end position="274"/>
    </location>
</feature>
<feature type="peptide" id="PRO_0000001652" description="AFGP8-4">
    <location>
        <begin position="278"/>
        <end position="291"/>
    </location>
</feature>
<feature type="peptide" id="PRO_0000001653" description="AFGP8-1">
    <location>
        <begin position="295"/>
        <end position="308"/>
    </location>
</feature>
<feature type="peptide" id="PRO_0000001654" description="AFGP8-4">
    <location>
        <begin position="312"/>
        <end position="325"/>
    </location>
</feature>
<feature type="peptide" id="PRO_0000001655" description="AFGP8-1">
    <location>
        <begin position="329"/>
        <end position="342"/>
    </location>
</feature>
<feature type="peptide" id="PRO_0000001656" description="AFGP8-4">
    <location>
        <begin position="346"/>
        <end position="359"/>
    </location>
</feature>
<feature type="peptide" id="PRO_0000001657" description="AFGP8-1">
    <location>
        <begin position="363"/>
        <end position="376"/>
    </location>
</feature>
<feature type="peptide" id="PRO_0000001658" description="AFGP8-3">
    <location>
        <begin position="380"/>
        <end position="393"/>
    </location>
</feature>
<feature type="peptide" id="PRO_0000001659" description="AFGP8-4">
    <location>
        <begin position="397"/>
        <end position="410"/>
    </location>
</feature>
<feature type="peptide" id="PRO_0000001660" description="AFGP8-1">
    <location>
        <begin position="414"/>
        <end position="427"/>
    </location>
</feature>
<feature type="peptide" id="PRO_0000001661" description="AFGP8-4">
    <location>
        <begin position="431"/>
        <end position="444"/>
    </location>
</feature>
<feature type="peptide" id="PRO_0000001662" description="AFGP8-1">
    <location>
        <begin position="448"/>
        <end position="461"/>
    </location>
</feature>
<feature type="peptide" id="PRO_0000001663" description="AFGP8-1">
    <location>
        <begin position="465"/>
        <end position="478"/>
    </location>
</feature>
<feature type="peptide" id="PRO_0000001664" description="AFGP8-4">
    <location>
        <begin position="482"/>
        <end position="495"/>
    </location>
</feature>
<feature type="peptide" id="PRO_0000001665" description="AFGP8-1">
    <location>
        <begin position="499"/>
        <end position="512"/>
    </location>
</feature>
<feature type="peptide" id="PRO_0000001666" description="AFGP8-1">
    <location>
        <begin position="516"/>
        <end position="529"/>
    </location>
</feature>
<feature type="peptide" id="PRO_0000001667" description="AFGP8-4">
    <location>
        <begin position="533"/>
        <end position="546"/>
    </location>
</feature>
<feature type="peptide" id="PRO_0000001668" description="AFGP8-1">
    <location>
        <begin position="550"/>
        <end position="563"/>
    </location>
</feature>
<feature type="peptide" id="PRO_0000001669" description="AFGP8-4">
    <location>
        <begin position="567"/>
        <end position="580"/>
    </location>
</feature>
<feature type="peptide" id="PRO_0000001670" description="AFGP8-3">
    <location>
        <begin position="584"/>
        <end position="597"/>
    </location>
</feature>
<feature type="peptide" id="PRO_0000001671" description="AFGP8-4">
    <location>
        <begin position="601"/>
        <end position="614"/>
    </location>
</feature>
<feature type="peptide" id="PRO_0000001672" description="AFGP8-1">
    <location>
        <begin position="618"/>
        <end position="631"/>
    </location>
</feature>
<feature type="peptide" id="PRO_0000001673" description="AFGP8-1">
    <location>
        <begin position="635"/>
        <end position="648"/>
    </location>
</feature>
<feature type="peptide" id="PRO_0000001674" description="AFGP8-4">
    <location>
        <begin position="652"/>
        <end position="665"/>
    </location>
</feature>
<feature type="peptide" id="PRO_0000001675" description="AFGP8-1">
    <location>
        <begin position="669"/>
        <end position="682"/>
    </location>
</feature>
<feature type="peptide" id="PRO_0000001676" description="AFGP8-4">
    <location>
        <begin position="686"/>
        <end position="699"/>
    </location>
</feature>
<feature type="peptide" id="PRO_0000001677" description="AFGP8-1">
    <location>
        <begin position="703"/>
        <end position="716"/>
    </location>
</feature>
<feature type="peptide" id="PRO_0000001678" description="AFGP7-1">
    <location>
        <begin position="720"/>
        <end position="736"/>
    </location>
</feature>
<feature type="peptide" id="PRO_0000001679" description="AFGP7-2">
    <location>
        <begin position="740"/>
        <end position="756"/>
    </location>
</feature>
<feature type="peptide" id="PRO_0000001680" description="AFGP8-3">
    <location>
        <begin position="760"/>
        <end position="773"/>
    </location>
</feature>
<feature type="peptide" id="PRO_0000001681" description="AFGP8-like">
    <location>
        <begin position="777"/>
        <end position="790"/>
    </location>
</feature>
<feature type="non-terminal residue">
    <location>
        <position position="1"/>
    </location>
</feature>